<feature type="chain" id="PRO_0000256804" description="UPF0391 membrane protein XOO1885">
    <location>
        <begin position="1"/>
        <end position="57"/>
    </location>
</feature>
<feature type="transmembrane region" description="Helical" evidence="1">
    <location>
        <begin position="4"/>
        <end position="24"/>
    </location>
</feature>
<feature type="transmembrane region" description="Helical" evidence="1">
    <location>
        <begin position="33"/>
        <end position="53"/>
    </location>
</feature>
<comment type="subcellular location">
    <subcellularLocation>
        <location evidence="1">Cell membrane</location>
        <topology evidence="1">Multi-pass membrane protein</topology>
    </subcellularLocation>
</comment>
<comment type="similarity">
    <text evidence="1">Belongs to the UPF0391 family.</text>
</comment>
<organism>
    <name type="scientific">Xanthomonas oryzae pv. oryzae (strain KACC10331 / KXO85)</name>
    <dbReference type="NCBI Taxonomy" id="291331"/>
    <lineage>
        <taxon>Bacteria</taxon>
        <taxon>Pseudomonadati</taxon>
        <taxon>Pseudomonadota</taxon>
        <taxon>Gammaproteobacteria</taxon>
        <taxon>Lysobacterales</taxon>
        <taxon>Lysobacteraceae</taxon>
        <taxon>Xanthomonas</taxon>
    </lineage>
</organism>
<keyword id="KW-1003">Cell membrane</keyword>
<keyword id="KW-0472">Membrane</keyword>
<keyword id="KW-1185">Reference proteome</keyword>
<keyword id="KW-0812">Transmembrane</keyword>
<keyword id="KW-1133">Transmembrane helix</keyword>
<dbReference type="EMBL" id="AE013598">
    <property type="protein sequence ID" value="AAW75139.1"/>
    <property type="molecule type" value="Genomic_DNA"/>
</dbReference>
<dbReference type="STRING" id="291331.XOO1885"/>
<dbReference type="KEGG" id="xoo:XOO1885"/>
<dbReference type="HOGENOM" id="CLU_187346_1_1_6"/>
<dbReference type="Proteomes" id="UP000006735">
    <property type="component" value="Chromosome"/>
</dbReference>
<dbReference type="GO" id="GO:0005886">
    <property type="term" value="C:plasma membrane"/>
    <property type="evidence" value="ECO:0007669"/>
    <property type="project" value="UniProtKB-SubCell"/>
</dbReference>
<dbReference type="HAMAP" id="MF_01361">
    <property type="entry name" value="UPF0391"/>
    <property type="match status" value="1"/>
</dbReference>
<dbReference type="InterPro" id="IPR009760">
    <property type="entry name" value="DUF1328"/>
</dbReference>
<dbReference type="NCBIfam" id="NF010231">
    <property type="entry name" value="PRK13682.2-1"/>
    <property type="match status" value="1"/>
</dbReference>
<dbReference type="Pfam" id="PF07043">
    <property type="entry name" value="DUF1328"/>
    <property type="match status" value="1"/>
</dbReference>
<dbReference type="PIRSF" id="PIRSF036466">
    <property type="entry name" value="UCP036466"/>
    <property type="match status" value="1"/>
</dbReference>
<name>Y1885_XANOR</name>
<proteinExistence type="inferred from homology"/>
<protein>
    <recommendedName>
        <fullName evidence="1">UPF0391 membrane protein XOO1885</fullName>
    </recommendedName>
</protein>
<gene>
    <name type="ordered locus">XOO1885</name>
</gene>
<reference key="1">
    <citation type="journal article" date="2005" name="Nucleic Acids Res.">
        <title>The genome sequence of Xanthomonas oryzae pathovar oryzae KACC10331, the bacterial blight pathogen of rice.</title>
        <authorList>
            <person name="Lee B.-M."/>
            <person name="Park Y.-J."/>
            <person name="Park D.-S."/>
            <person name="Kang H.-W."/>
            <person name="Kim J.-G."/>
            <person name="Song E.-S."/>
            <person name="Park I.-C."/>
            <person name="Yoon U.-H."/>
            <person name="Hahn J.-H."/>
            <person name="Koo B.-S."/>
            <person name="Lee G.-B."/>
            <person name="Kim H."/>
            <person name="Park H.-S."/>
            <person name="Yoon K.-O."/>
            <person name="Kim J.-H."/>
            <person name="Jung C.-H."/>
            <person name="Koh N.-H."/>
            <person name="Seo J.-S."/>
            <person name="Go S.-J."/>
        </authorList>
    </citation>
    <scope>NUCLEOTIDE SEQUENCE [LARGE SCALE GENOMIC DNA]</scope>
    <source>
        <strain>KACC10331 / KXO85</strain>
    </source>
</reference>
<accession>Q5H1N2</accession>
<sequence length="57" mass="5894">MIKWAIIFAIIGLIAGALGFGGMAGAAMGIAKFLFWAGIIIAIVLFVLGMTIAKKVI</sequence>
<evidence type="ECO:0000255" key="1">
    <source>
        <dbReference type="HAMAP-Rule" id="MF_01361"/>
    </source>
</evidence>